<reference key="1">
    <citation type="journal article" date="1998" name="Mech. Dev.">
        <title>Zebrafish wnt11: pattern and regulation of the expression by the yolk cell and no tail activity.</title>
        <authorList>
            <person name="Makita R."/>
            <person name="Mizuno T."/>
            <person name="Kuroiwa A."/>
            <person name="Koshida S."/>
            <person name="Takeda H."/>
        </authorList>
    </citation>
    <scope>NUCLEOTIDE SEQUENCE [MRNA]</scope>
</reference>
<reference key="2">
    <citation type="journal article" date="2005" name="Neuron">
        <title>Early stages of zebrafish eye formation require the coordinated activity of Wnt11, Fz5, and the Wnt/beta-catenin pathway.</title>
        <authorList>
            <person name="Cavodeassi F."/>
            <person name="Carreira-Barbosa F."/>
            <person name="Young R.M."/>
            <person name="Concha M.L."/>
            <person name="Allende M.L."/>
            <person name="Houart C."/>
            <person name="Tada M."/>
            <person name="Wilson S.W."/>
        </authorList>
    </citation>
    <scope>FUNCTION</scope>
</reference>
<evidence type="ECO:0000250" key="1">
    <source>
        <dbReference type="UniProtKB" id="P27467"/>
    </source>
</evidence>
<evidence type="ECO:0000250" key="2">
    <source>
        <dbReference type="UniProtKB" id="P28026"/>
    </source>
</evidence>
<evidence type="ECO:0000250" key="3">
    <source>
        <dbReference type="UniProtKB" id="P56704"/>
    </source>
</evidence>
<evidence type="ECO:0000255" key="4"/>
<evidence type="ECO:0000269" key="5">
    <source>
    </source>
</evidence>
<evidence type="ECO:0000305" key="6"/>
<evidence type="ECO:0000305" key="7">
    <source>
    </source>
</evidence>
<name>WNT11_DANRE</name>
<feature type="signal peptide" evidence="4">
    <location>
        <begin position="1"/>
        <end position="23"/>
    </location>
</feature>
<feature type="chain" id="PRO_0000041469" description="Protein Wnt-11">
    <location>
        <begin position="24"/>
        <end position="354"/>
    </location>
</feature>
<feature type="lipid moiety-binding region" description="O-palmitoleoyl serine; by PORCN" evidence="3">
    <location>
        <position position="215"/>
    </location>
</feature>
<feature type="glycosylation site" description="N-linked (GlcNAc...) asparagine" evidence="4">
    <location>
        <position position="32"/>
    </location>
</feature>
<feature type="glycosylation site" description="N-linked (GlcNAc...) asparagine" evidence="4">
    <location>
        <position position="39"/>
    </location>
</feature>
<feature type="glycosylation site" description="N-linked (GlcNAc...) asparagine" evidence="4">
    <location>
        <position position="89"/>
    </location>
</feature>
<feature type="glycosylation site" description="N-linked (GlcNAc...) asparagine" evidence="4">
    <location>
        <position position="300"/>
    </location>
</feature>
<feature type="disulfide bond" evidence="2">
    <location>
        <begin position="129"/>
        <end position="137"/>
    </location>
</feature>
<feature type="disulfide bond" evidence="2">
    <location>
        <begin position="139"/>
        <end position="156"/>
    </location>
</feature>
<feature type="disulfide bond" evidence="2">
    <location>
        <begin position="209"/>
        <end position="223"/>
    </location>
</feature>
<feature type="disulfide bond" evidence="2">
    <location>
        <begin position="211"/>
        <end position="218"/>
    </location>
</feature>
<feature type="disulfide bond" evidence="2">
    <location>
        <begin position="283"/>
        <end position="314"/>
    </location>
</feature>
<feature type="disulfide bond" evidence="2">
    <location>
        <begin position="299"/>
        <end position="309"/>
    </location>
</feature>
<feature type="disulfide bond" evidence="2">
    <location>
        <begin position="329"/>
        <end position="344"/>
    </location>
</feature>
<feature type="disulfide bond" evidence="2">
    <location>
        <begin position="331"/>
        <end position="341"/>
    </location>
</feature>
<feature type="disulfide bond" evidence="2">
    <location>
        <begin position="336"/>
        <end position="337"/>
    </location>
</feature>
<dbReference type="EMBL" id="AF067429">
    <property type="protein sequence ID" value="AAC17922.1"/>
    <property type="molecule type" value="mRNA"/>
</dbReference>
<dbReference type="SMR" id="O73864"/>
<dbReference type="FunCoup" id="O73864">
    <property type="interactions" value="715"/>
</dbReference>
<dbReference type="STRING" id="7955.ENSDARP00000012233"/>
<dbReference type="GlyCosmos" id="O73864">
    <property type="glycosylation" value="4 sites, No reported glycans"/>
</dbReference>
<dbReference type="PaxDb" id="7955-ENSDARP00000012233"/>
<dbReference type="AGR" id="ZFIN:ZDB-GENE-990603-12"/>
<dbReference type="ZFIN" id="ZDB-GENE-990603-12">
    <property type="gene designation" value="wnt11f2"/>
</dbReference>
<dbReference type="eggNOG" id="KOG3913">
    <property type="taxonomic scope" value="Eukaryota"/>
</dbReference>
<dbReference type="InParanoid" id="O73864"/>
<dbReference type="PhylomeDB" id="O73864"/>
<dbReference type="PRO" id="PR:O73864"/>
<dbReference type="Proteomes" id="UP000000437">
    <property type="component" value="Unplaced"/>
</dbReference>
<dbReference type="GO" id="GO:0005737">
    <property type="term" value="C:cytoplasm"/>
    <property type="evidence" value="ECO:0000250"/>
    <property type="project" value="UniProtKB"/>
</dbReference>
<dbReference type="GO" id="GO:0005615">
    <property type="term" value="C:extracellular space"/>
    <property type="evidence" value="ECO:0000318"/>
    <property type="project" value="GO_Central"/>
</dbReference>
<dbReference type="GO" id="GO:0005886">
    <property type="term" value="C:plasma membrane"/>
    <property type="evidence" value="ECO:0000314"/>
    <property type="project" value="ZFIN"/>
</dbReference>
<dbReference type="GO" id="GO:0005125">
    <property type="term" value="F:cytokine activity"/>
    <property type="evidence" value="ECO:0000318"/>
    <property type="project" value="GO_Central"/>
</dbReference>
<dbReference type="GO" id="GO:0005109">
    <property type="term" value="F:frizzled binding"/>
    <property type="evidence" value="ECO:0000318"/>
    <property type="project" value="GO_Central"/>
</dbReference>
<dbReference type="GO" id="GO:0046982">
    <property type="term" value="F:protein heterodimerization activity"/>
    <property type="evidence" value="ECO:0000353"/>
    <property type="project" value="ZFIN"/>
</dbReference>
<dbReference type="GO" id="GO:0043010">
    <property type="term" value="P:camera-type eye development"/>
    <property type="evidence" value="ECO:0000315"/>
    <property type="project" value="ZFIN"/>
</dbReference>
<dbReference type="GO" id="GO:0060070">
    <property type="term" value="P:canonical Wnt signaling pathway"/>
    <property type="evidence" value="ECO:0000318"/>
    <property type="project" value="GO_Central"/>
</dbReference>
<dbReference type="GO" id="GO:0045165">
    <property type="term" value="P:cell fate commitment"/>
    <property type="evidence" value="ECO:0000318"/>
    <property type="project" value="GO_Central"/>
</dbReference>
<dbReference type="GO" id="GO:0016477">
    <property type="term" value="P:cell migration"/>
    <property type="evidence" value="ECO:0000315"/>
    <property type="project" value="ZFIN"/>
</dbReference>
<dbReference type="GO" id="GO:0042074">
    <property type="term" value="P:cell migration involved in gastrulation"/>
    <property type="evidence" value="ECO:0000315"/>
    <property type="project" value="ZFIN"/>
</dbReference>
<dbReference type="GO" id="GO:0098609">
    <property type="term" value="P:cell-cell adhesion"/>
    <property type="evidence" value="ECO:0000315"/>
    <property type="project" value="ZFIN"/>
</dbReference>
<dbReference type="GO" id="GO:0007417">
    <property type="term" value="P:central nervous system development"/>
    <property type="evidence" value="ECO:0000315"/>
    <property type="project" value="ZFIN"/>
</dbReference>
<dbReference type="GO" id="GO:0060026">
    <property type="term" value="P:convergent extension"/>
    <property type="evidence" value="ECO:0000316"/>
    <property type="project" value="ZFIN"/>
</dbReference>
<dbReference type="GO" id="GO:0060028">
    <property type="term" value="P:convergent extension involved in axis elongation"/>
    <property type="evidence" value="ECO:0000315"/>
    <property type="project" value="ZFIN"/>
</dbReference>
<dbReference type="GO" id="GO:0060027">
    <property type="term" value="P:convergent extension involved in gastrulation"/>
    <property type="evidence" value="ECO:0000315"/>
    <property type="project" value="ZFIN"/>
</dbReference>
<dbReference type="GO" id="GO:0048048">
    <property type="term" value="P:embryonic eye morphogenesis"/>
    <property type="evidence" value="ECO:0000315"/>
    <property type="project" value="ZFIN"/>
</dbReference>
<dbReference type="GO" id="GO:0000132">
    <property type="term" value="P:establishment of mitotic spindle orientation"/>
    <property type="evidence" value="ECO:0000315"/>
    <property type="project" value="ZFIN"/>
</dbReference>
<dbReference type="GO" id="GO:0060898">
    <property type="term" value="P:eye field cell fate commitment involved in camera-type eye formation"/>
    <property type="evidence" value="ECO:0000315"/>
    <property type="project" value="ZFIN"/>
</dbReference>
<dbReference type="GO" id="GO:0001702">
    <property type="term" value="P:gastrulation with mouth forming second"/>
    <property type="evidence" value="ECO:0000315"/>
    <property type="project" value="ZFIN"/>
</dbReference>
<dbReference type="GO" id="GO:0007507">
    <property type="term" value="P:heart development"/>
    <property type="evidence" value="ECO:0000315"/>
    <property type="project" value="ZFIN"/>
</dbReference>
<dbReference type="GO" id="GO:0001947">
    <property type="term" value="P:heart looping"/>
    <property type="evidence" value="ECO:0000316"/>
    <property type="project" value="ZFIN"/>
</dbReference>
<dbReference type="GO" id="GO:0035556">
    <property type="term" value="P:intracellular signal transduction"/>
    <property type="evidence" value="ECO:0000250"/>
    <property type="project" value="UniProtKB"/>
</dbReference>
<dbReference type="GO" id="GO:0070121">
    <property type="term" value="P:Kupffer's vesicle development"/>
    <property type="evidence" value="ECO:0000316"/>
    <property type="project" value="ZFIN"/>
</dbReference>
<dbReference type="GO" id="GO:0060031">
    <property type="term" value="P:mediolateral intercalation"/>
    <property type="evidence" value="ECO:0000315"/>
    <property type="project" value="ZFIN"/>
</dbReference>
<dbReference type="GO" id="GO:0008078">
    <property type="term" value="P:mesodermal cell migration"/>
    <property type="evidence" value="ECO:0000315"/>
    <property type="project" value="ZFIN"/>
</dbReference>
<dbReference type="GO" id="GO:0090090">
    <property type="term" value="P:negative regulation of canonical Wnt signaling pathway"/>
    <property type="evidence" value="ECO:0000316"/>
    <property type="project" value="ZFIN"/>
</dbReference>
<dbReference type="GO" id="GO:0001839">
    <property type="term" value="P:neural plate morphogenesis"/>
    <property type="evidence" value="ECO:0000315"/>
    <property type="project" value="ZFIN"/>
</dbReference>
<dbReference type="GO" id="GO:0061101">
    <property type="term" value="P:neuroendocrine cell differentiation"/>
    <property type="evidence" value="ECO:0000250"/>
    <property type="project" value="UniProtKB"/>
</dbReference>
<dbReference type="GO" id="GO:0030182">
    <property type="term" value="P:neuron differentiation"/>
    <property type="evidence" value="ECO:0000318"/>
    <property type="project" value="GO_Central"/>
</dbReference>
<dbReference type="GO" id="GO:0035567">
    <property type="term" value="P:non-canonical Wnt signaling pathway"/>
    <property type="evidence" value="ECO:0000315"/>
    <property type="project" value="ZFIN"/>
</dbReference>
<dbReference type="GO" id="GO:0045893">
    <property type="term" value="P:positive regulation of DNA-templated transcription"/>
    <property type="evidence" value="ECO:0000250"/>
    <property type="project" value="UniProtKB"/>
</dbReference>
<dbReference type="GO" id="GO:0008104">
    <property type="term" value="P:protein localization"/>
    <property type="evidence" value="ECO:0000316"/>
    <property type="project" value="ZFIN"/>
</dbReference>
<dbReference type="GO" id="GO:0030100">
    <property type="term" value="P:regulation of endocytosis"/>
    <property type="evidence" value="ECO:0000315"/>
    <property type="project" value="ZFIN"/>
</dbReference>
<dbReference type="GO" id="GO:0062009">
    <property type="term" value="P:secondary palate development"/>
    <property type="evidence" value="ECO:0000250"/>
    <property type="project" value="UniProtKB"/>
</dbReference>
<dbReference type="GO" id="GO:0007165">
    <property type="term" value="P:signal transduction"/>
    <property type="evidence" value="ECO:0000250"/>
    <property type="project" value="UniProtKB"/>
</dbReference>
<dbReference type="CDD" id="cd19343">
    <property type="entry name" value="Wnt_Wnt11"/>
    <property type="match status" value="1"/>
</dbReference>
<dbReference type="FunFam" id="3.30.2460.20:FF:000001">
    <property type="entry name" value="Wnt homolog"/>
    <property type="match status" value="1"/>
</dbReference>
<dbReference type="Gene3D" id="3.30.2460.20">
    <property type="match status" value="1"/>
</dbReference>
<dbReference type="InterPro" id="IPR005817">
    <property type="entry name" value="Wnt"/>
</dbReference>
<dbReference type="InterPro" id="IPR043158">
    <property type="entry name" value="Wnt_C"/>
</dbReference>
<dbReference type="InterPro" id="IPR018161">
    <property type="entry name" value="Wnt_CS"/>
</dbReference>
<dbReference type="PANTHER" id="PTHR12027:SF34">
    <property type="entry name" value="PROTEIN WNT"/>
    <property type="match status" value="1"/>
</dbReference>
<dbReference type="PANTHER" id="PTHR12027">
    <property type="entry name" value="WNT RELATED"/>
    <property type="match status" value="1"/>
</dbReference>
<dbReference type="Pfam" id="PF00110">
    <property type="entry name" value="wnt"/>
    <property type="match status" value="1"/>
</dbReference>
<dbReference type="PRINTS" id="PR01349">
    <property type="entry name" value="WNTPROTEIN"/>
</dbReference>
<dbReference type="SMART" id="SM00097">
    <property type="entry name" value="WNT1"/>
    <property type="match status" value="1"/>
</dbReference>
<dbReference type="PROSITE" id="PS00246">
    <property type="entry name" value="WNT1"/>
    <property type="match status" value="1"/>
</dbReference>
<organism>
    <name type="scientific">Danio rerio</name>
    <name type="common">Zebrafish</name>
    <name type="synonym">Brachydanio rerio</name>
    <dbReference type="NCBI Taxonomy" id="7955"/>
    <lineage>
        <taxon>Eukaryota</taxon>
        <taxon>Metazoa</taxon>
        <taxon>Chordata</taxon>
        <taxon>Craniata</taxon>
        <taxon>Vertebrata</taxon>
        <taxon>Euteleostomi</taxon>
        <taxon>Actinopterygii</taxon>
        <taxon>Neopterygii</taxon>
        <taxon>Teleostei</taxon>
        <taxon>Ostariophysi</taxon>
        <taxon>Cypriniformes</taxon>
        <taxon>Danionidae</taxon>
        <taxon>Danioninae</taxon>
        <taxon>Danio</taxon>
    </lineage>
</organism>
<gene>
    <name type="primary">wnt11</name>
    <name type="synonym">wnt-11</name>
</gene>
<protein>
    <recommendedName>
        <fullName>Protein Wnt-11</fullName>
    </recommendedName>
</protein>
<proteinExistence type="evidence at transcript level"/>
<sequence length="354" mass="39150">MTEYRNFLLLFITSLSVIYPCTGISWLGLTINGSSVGWNQTHHCKLLDGLVPDQQQLCKRNLELMHSIVRAARLTKSACTSSFSDMRWNWSSIESAPHFTPDLAKGTREAAFVVSLAAAVVSHAIARACASGDLPSCSCAAMPSEQAAPDFRWGGCGDNLRYYGLQMGSAFSDAPMRNRRSGPQDFRLMQLHNNAVGRQVLMDSLEMKCKCHGVSGSCSVKTCWKGLQDISTISADLKSKYLSATKVIPRQIGTRRQLVPREMEVRPVGENELVYLVSSPDYCTQNAKQGSLGTTDRQCNKTASGSESCGLMCCGRGYNAYTEVLVERCQCKYHWCCYVSCKTCKRTVERYVSK</sequence>
<comment type="function">
    <text evidence="5 7">Ligand for fzd5, a member of the G-protein coupled frizzled receptor family (Probable). Plays a role in early eye development, possibly through wnt non-canonical signaling. Promotes eye formation, at least partially, by antagonizing the Wnt/beta-catenin pathway. In addition, promotes coherence of eye field cells, potentially contributing to the coordinated morphogenetic behaviors of cells in the nascent eye field (PubMed:15996547).</text>
</comment>
<comment type="subcellular location">
    <subcellularLocation>
        <location>Secreted</location>
        <location>Extracellular space</location>
        <location>Extracellular matrix</location>
    </subcellularLocation>
</comment>
<comment type="developmental stage">
    <text evidence="5">Expressed during embryogenesis. During gastrulation, expressed in the anterior neural plate (PubMed:15996547).</text>
</comment>
<comment type="PTM">
    <text evidence="1 3">Palmitoleoylation is required for efficient binding to frizzled receptors. Depalmitoleoylation leads to Wnt signaling pathway inhibition.</text>
</comment>
<comment type="similarity">
    <text evidence="6">Belongs to the Wnt family.</text>
</comment>
<keyword id="KW-0217">Developmental protein</keyword>
<keyword id="KW-1015">Disulfide bond</keyword>
<keyword id="KW-0272">Extracellular matrix</keyword>
<keyword id="KW-0325">Glycoprotein</keyword>
<keyword id="KW-0449">Lipoprotein</keyword>
<keyword id="KW-1185">Reference proteome</keyword>
<keyword id="KW-0964">Secreted</keyword>
<keyword id="KW-0732">Signal</keyword>
<keyword id="KW-0879">Wnt signaling pathway</keyword>
<accession>O73864</accession>